<protein>
    <recommendedName>
        <fullName>RRP15-like protein</fullName>
    </recommendedName>
</protein>
<reference key="1">
    <citation type="journal article" date="2003" name="PLoS Biol.">
        <title>The genome sequence of Caenorhabditis briggsae: a platform for comparative genomics.</title>
        <authorList>
            <person name="Stein L.D."/>
            <person name="Bao Z."/>
            <person name="Blasiar D."/>
            <person name="Blumenthal T."/>
            <person name="Brent M.R."/>
            <person name="Chen N."/>
            <person name="Chinwalla A."/>
            <person name="Clarke L."/>
            <person name="Clee C."/>
            <person name="Coghlan A."/>
            <person name="Coulson A."/>
            <person name="D'Eustachio P."/>
            <person name="Fitch D.H.A."/>
            <person name="Fulton L.A."/>
            <person name="Fulton R.E."/>
            <person name="Griffiths-Jones S."/>
            <person name="Harris T.W."/>
            <person name="Hillier L.W."/>
            <person name="Kamath R."/>
            <person name="Kuwabara P.E."/>
            <person name="Mardis E.R."/>
            <person name="Marra M.A."/>
            <person name="Miner T.L."/>
            <person name="Minx P."/>
            <person name="Mullikin J.C."/>
            <person name="Plumb R.W."/>
            <person name="Rogers J."/>
            <person name="Schein J.E."/>
            <person name="Sohrmann M."/>
            <person name="Spieth J."/>
            <person name="Stajich J.E."/>
            <person name="Wei C."/>
            <person name="Willey D."/>
            <person name="Wilson R.K."/>
            <person name="Durbin R.M."/>
            <person name="Waterston R.H."/>
        </authorList>
    </citation>
    <scope>NUCLEOTIDE SEQUENCE [LARGE SCALE GENOMIC DNA]</scope>
    <source>
        <strain>AF16</strain>
    </source>
</reference>
<comment type="similarity">
    <text evidence="3">Belongs to the RRP15 family.</text>
</comment>
<keyword id="KW-0175">Coiled coil</keyword>
<keyword id="KW-1185">Reference proteome</keyword>
<organism>
    <name type="scientific">Caenorhabditis briggsae</name>
    <dbReference type="NCBI Taxonomy" id="6238"/>
    <lineage>
        <taxon>Eukaryota</taxon>
        <taxon>Metazoa</taxon>
        <taxon>Ecdysozoa</taxon>
        <taxon>Nematoda</taxon>
        <taxon>Chromadorea</taxon>
        <taxon>Rhabditida</taxon>
        <taxon>Rhabditina</taxon>
        <taxon>Rhabditomorpha</taxon>
        <taxon>Rhabditoidea</taxon>
        <taxon>Rhabditidae</taxon>
        <taxon>Peloderinae</taxon>
        <taxon>Caenorhabditis</taxon>
    </lineage>
</organism>
<evidence type="ECO:0000255" key="1"/>
<evidence type="ECO:0000256" key="2">
    <source>
        <dbReference type="SAM" id="MobiDB-lite"/>
    </source>
</evidence>
<evidence type="ECO:0000305" key="3"/>
<accession>Q61RF0</accession>
<accession>A8X2N9</accession>
<gene>
    <name type="ORF">CBG06617</name>
</gene>
<feature type="chain" id="PRO_0000273217" description="RRP15-like protein">
    <location>
        <begin position="1"/>
        <end position="190"/>
    </location>
</feature>
<feature type="region of interest" description="Disordered" evidence="2">
    <location>
        <begin position="1"/>
        <end position="69"/>
    </location>
</feature>
<feature type="region of interest" description="Disordered" evidence="2">
    <location>
        <begin position="119"/>
        <end position="190"/>
    </location>
</feature>
<feature type="coiled-coil region" evidence="1">
    <location>
        <begin position="59"/>
        <end position="84"/>
    </location>
</feature>
<feature type="compositionally biased region" description="Basic and acidic residues" evidence="2">
    <location>
        <begin position="1"/>
        <end position="11"/>
    </location>
</feature>
<feature type="compositionally biased region" description="Basic residues" evidence="2">
    <location>
        <begin position="55"/>
        <end position="66"/>
    </location>
</feature>
<feature type="compositionally biased region" description="Basic and acidic residues" evidence="2">
    <location>
        <begin position="119"/>
        <end position="153"/>
    </location>
</feature>
<feature type="compositionally biased region" description="Acidic residues" evidence="2">
    <location>
        <begin position="167"/>
        <end position="190"/>
    </location>
</feature>
<name>RRP15_CAEBR</name>
<sequence>MSTKNRDRLVVTEDSDDDNEHEEMSSGDNSGEEGPSYGDAAARDPDETVAFPAPQRKKKKVIKKLTRKEQSLKHSVKEYRIKLAMVKPDITTDREKERNLRRIATKGVVQLFNAVSDRQKTMSDAVKEKMTARDRKEARERFDGKNFDSDKFADSGYGYGGKNEVKGEEEDEQMNIGDDEIDAGNYSDED</sequence>
<dbReference type="EMBL" id="HE601320">
    <property type="protein sequence ID" value="CAP26899.1"/>
    <property type="molecule type" value="Genomic_DNA"/>
</dbReference>
<dbReference type="RefSeq" id="XP_002647535.1">
    <property type="nucleotide sequence ID" value="XM_002647489.1"/>
</dbReference>
<dbReference type="SMR" id="Q61RF0"/>
<dbReference type="FunCoup" id="Q61RF0">
    <property type="interactions" value="7"/>
</dbReference>
<dbReference type="STRING" id="6238.Q61RF0"/>
<dbReference type="EnsemblMetazoa" id="CBG06617.1">
    <property type="protein sequence ID" value="CBG06617.1"/>
    <property type="gene ID" value="WBGene00028866"/>
</dbReference>
<dbReference type="GeneID" id="8589533"/>
<dbReference type="KEGG" id="cbr:CBG_06617"/>
<dbReference type="CTD" id="8589533"/>
<dbReference type="WormBase" id="CBG06617">
    <property type="protein sequence ID" value="CBP01700"/>
    <property type="gene ID" value="WBGene00028866"/>
</dbReference>
<dbReference type="eggNOG" id="KOG2974">
    <property type="taxonomic scope" value="Eukaryota"/>
</dbReference>
<dbReference type="HOGENOM" id="CLU_1435660_0_0_1"/>
<dbReference type="InParanoid" id="Q61RF0"/>
<dbReference type="OMA" id="MSTKNRD"/>
<dbReference type="Proteomes" id="UP000008549">
    <property type="component" value="Unassembled WGS sequence"/>
</dbReference>
<dbReference type="GO" id="GO:0030687">
    <property type="term" value="C:preribosome, large subunit precursor"/>
    <property type="evidence" value="ECO:0000318"/>
    <property type="project" value="GO_Central"/>
</dbReference>
<dbReference type="GO" id="GO:0000460">
    <property type="term" value="P:maturation of 5.8S rRNA"/>
    <property type="evidence" value="ECO:0000318"/>
    <property type="project" value="GO_Central"/>
</dbReference>
<dbReference type="GO" id="GO:0000470">
    <property type="term" value="P:maturation of LSU-rRNA"/>
    <property type="evidence" value="ECO:0000318"/>
    <property type="project" value="GO_Central"/>
</dbReference>
<dbReference type="InterPro" id="IPR012459">
    <property type="entry name" value="Rrp15"/>
</dbReference>
<dbReference type="PANTHER" id="PTHR13245">
    <property type="entry name" value="RRP15-LIKE PROTEIN"/>
    <property type="match status" value="1"/>
</dbReference>
<dbReference type="PANTHER" id="PTHR13245:SF14">
    <property type="entry name" value="RRP15-LIKE PROTEIN"/>
    <property type="match status" value="1"/>
</dbReference>
<dbReference type="Pfam" id="PF07890">
    <property type="entry name" value="Rrp15p"/>
    <property type="match status" value="1"/>
</dbReference>
<proteinExistence type="inferred from homology"/>